<dbReference type="EC" id="4.2.1.10" evidence="1"/>
<dbReference type="EMBL" id="BA000043">
    <property type="protein sequence ID" value="BAD76342.1"/>
    <property type="molecule type" value="Genomic_DNA"/>
</dbReference>
<dbReference type="RefSeq" id="WP_011231543.1">
    <property type="nucleotide sequence ID" value="NC_006510.1"/>
</dbReference>
<dbReference type="PDB" id="2YR1">
    <property type="method" value="X-ray"/>
    <property type="resolution" value="2.00 A"/>
    <property type="chains" value="A/B=1-257"/>
</dbReference>
<dbReference type="PDBsum" id="2YR1"/>
<dbReference type="SMR" id="Q5KY94"/>
<dbReference type="STRING" id="235909.GK2057"/>
<dbReference type="KEGG" id="gka:GK2057"/>
<dbReference type="eggNOG" id="COG0710">
    <property type="taxonomic scope" value="Bacteria"/>
</dbReference>
<dbReference type="HOGENOM" id="CLU_064444_0_0_9"/>
<dbReference type="UniPathway" id="UPA00053">
    <property type="reaction ID" value="UER00086"/>
</dbReference>
<dbReference type="EvolutionaryTrace" id="Q5KY94"/>
<dbReference type="Proteomes" id="UP000001172">
    <property type="component" value="Chromosome"/>
</dbReference>
<dbReference type="GO" id="GO:0003855">
    <property type="term" value="F:3-dehydroquinate dehydratase activity"/>
    <property type="evidence" value="ECO:0007669"/>
    <property type="project" value="UniProtKB-UniRule"/>
</dbReference>
<dbReference type="GO" id="GO:0046279">
    <property type="term" value="P:3,4-dihydroxybenzoate biosynthetic process"/>
    <property type="evidence" value="ECO:0007669"/>
    <property type="project" value="TreeGrafter"/>
</dbReference>
<dbReference type="GO" id="GO:0008652">
    <property type="term" value="P:amino acid biosynthetic process"/>
    <property type="evidence" value="ECO:0007669"/>
    <property type="project" value="UniProtKB-KW"/>
</dbReference>
<dbReference type="GO" id="GO:0009073">
    <property type="term" value="P:aromatic amino acid family biosynthetic process"/>
    <property type="evidence" value="ECO:0007669"/>
    <property type="project" value="UniProtKB-KW"/>
</dbReference>
<dbReference type="GO" id="GO:0009423">
    <property type="term" value="P:chorismate biosynthetic process"/>
    <property type="evidence" value="ECO:0007669"/>
    <property type="project" value="UniProtKB-UniRule"/>
</dbReference>
<dbReference type="CDD" id="cd00502">
    <property type="entry name" value="DHQase_I"/>
    <property type="match status" value="1"/>
</dbReference>
<dbReference type="FunFam" id="3.20.20.70:FF:000047">
    <property type="entry name" value="3-dehydroquinate dehydratase"/>
    <property type="match status" value="1"/>
</dbReference>
<dbReference type="Gene3D" id="3.20.20.70">
    <property type="entry name" value="Aldolase class I"/>
    <property type="match status" value="1"/>
</dbReference>
<dbReference type="HAMAP" id="MF_00214">
    <property type="entry name" value="AroD"/>
    <property type="match status" value="1"/>
</dbReference>
<dbReference type="InterPro" id="IPR013785">
    <property type="entry name" value="Aldolase_TIM"/>
</dbReference>
<dbReference type="InterPro" id="IPR001381">
    <property type="entry name" value="DHquinase_I"/>
</dbReference>
<dbReference type="InterPro" id="IPR050146">
    <property type="entry name" value="Type-I_3-dehydroquinase"/>
</dbReference>
<dbReference type="NCBIfam" id="TIGR01093">
    <property type="entry name" value="aroD"/>
    <property type="match status" value="1"/>
</dbReference>
<dbReference type="PANTHER" id="PTHR43699">
    <property type="entry name" value="3-DEHYDROQUINATE DEHYDRATASE"/>
    <property type="match status" value="1"/>
</dbReference>
<dbReference type="PANTHER" id="PTHR43699:SF1">
    <property type="entry name" value="3-DEHYDROQUINATE DEHYDRATASE"/>
    <property type="match status" value="1"/>
</dbReference>
<dbReference type="Pfam" id="PF01487">
    <property type="entry name" value="DHquinase_I"/>
    <property type="match status" value="1"/>
</dbReference>
<dbReference type="SUPFAM" id="SSF51569">
    <property type="entry name" value="Aldolase"/>
    <property type="match status" value="1"/>
</dbReference>
<comment type="function">
    <text evidence="1">Involved in the third step of the chorismate pathway, which leads to the biosynthesis of aromatic amino acids. Catalyzes the cis-dehydration of 3-dehydroquinate (DHQ) and introduces the first double bond of the aromatic ring to yield 3-dehydroshikimate.</text>
</comment>
<comment type="catalytic activity">
    <reaction evidence="1">
        <text>3-dehydroquinate = 3-dehydroshikimate + H2O</text>
        <dbReference type="Rhea" id="RHEA:21096"/>
        <dbReference type="ChEBI" id="CHEBI:15377"/>
        <dbReference type="ChEBI" id="CHEBI:16630"/>
        <dbReference type="ChEBI" id="CHEBI:32364"/>
        <dbReference type="EC" id="4.2.1.10"/>
    </reaction>
</comment>
<comment type="pathway">
    <text evidence="1">Metabolic intermediate biosynthesis; chorismate biosynthesis; chorismate from D-erythrose 4-phosphate and phosphoenolpyruvate: step 3/7.</text>
</comment>
<comment type="subunit">
    <text evidence="1 2">Homodimer.</text>
</comment>
<comment type="similarity">
    <text evidence="1">Belongs to the type-I 3-dehydroquinase family.</text>
</comment>
<sequence>MNISPKAIKVRNIWIGGTEPCICAPVVGEDDRKVLREAEEVCRKQPDLLEWRADFFRAIDDQERVLATANGLRNIAGEIPILFTIRSEREGGQPIPLNEAEVRRLIEAICRSGAIDLVDYELAYGERIADVRRMTEECSVWLVVSRHYFDGTPRKETLLADMRQAERYGADIAKVAVMPKSPEDVLVLLQATEEARRELAIPLITMAMGGLGAITRLAGWLFGSAVTFAVGNQSSAPGQIPIDDVRTVLSILQTYSR</sequence>
<name>AROD_GEOKA</name>
<keyword id="KW-0002">3D-structure</keyword>
<keyword id="KW-0028">Amino-acid biosynthesis</keyword>
<keyword id="KW-0057">Aromatic amino acid biosynthesis</keyword>
<keyword id="KW-0456">Lyase</keyword>
<keyword id="KW-1185">Reference proteome</keyword>
<keyword id="KW-0704">Schiff base</keyword>
<accession>Q5KY94</accession>
<proteinExistence type="evidence at protein level"/>
<gene>
    <name evidence="1" type="primary">aroD</name>
    <name type="ordered locus">GK2057</name>
</gene>
<reference key="1">
    <citation type="journal article" date="2004" name="Nucleic Acids Res.">
        <title>Thermoadaptation trait revealed by the genome sequence of thermophilic Geobacillus kaustophilus.</title>
        <authorList>
            <person name="Takami H."/>
            <person name="Takaki Y."/>
            <person name="Chee G.-J."/>
            <person name="Nishi S."/>
            <person name="Shimamura S."/>
            <person name="Suzuki H."/>
            <person name="Matsui S."/>
            <person name="Uchiyama I."/>
        </authorList>
    </citation>
    <scope>NUCLEOTIDE SEQUENCE [LARGE SCALE GENOMIC DNA]</scope>
    <source>
        <strain>HTA426</strain>
    </source>
</reference>
<reference key="2">
    <citation type="submission" date="2011-07" db="PDB data bank">
        <title>Crystal structure of 3-dehydroquinate dehydratase from Geobacillus kaustophilus HTA426.</title>
        <authorList>
            <consortium name="RIKEN structural genomics initiative (RSGI)"/>
        </authorList>
    </citation>
    <scope>X-RAY CRYSTALLOGRAPHY (2.0 ANGSTROMS)</scope>
    <scope>SUBUNIT</scope>
</reference>
<protein>
    <recommendedName>
        <fullName evidence="1">3-dehydroquinate dehydratase</fullName>
        <shortName evidence="1">3-dehydroquinase</shortName>
        <ecNumber evidence="1">4.2.1.10</ecNumber>
    </recommendedName>
    <alternativeName>
        <fullName evidence="1">Type I DHQase</fullName>
    </alternativeName>
    <alternativeName>
        <fullName evidence="1">Type I dehydroquinase</fullName>
        <shortName evidence="1">DHQ1</shortName>
    </alternativeName>
</protein>
<organism>
    <name type="scientific">Geobacillus kaustophilus (strain HTA426)</name>
    <dbReference type="NCBI Taxonomy" id="235909"/>
    <lineage>
        <taxon>Bacteria</taxon>
        <taxon>Bacillati</taxon>
        <taxon>Bacillota</taxon>
        <taxon>Bacilli</taxon>
        <taxon>Bacillales</taxon>
        <taxon>Anoxybacillaceae</taxon>
        <taxon>Geobacillus</taxon>
        <taxon>Geobacillus thermoleovorans group</taxon>
    </lineage>
</organism>
<feature type="chain" id="PRO_0000325524" description="3-dehydroquinate dehydratase">
    <location>
        <begin position="1"/>
        <end position="257"/>
    </location>
</feature>
<feature type="active site" description="Proton donor/acceptor" evidence="1">
    <location>
        <position position="147"/>
    </location>
</feature>
<feature type="active site" description="Schiff-base intermediate with substrate" evidence="1">
    <location>
        <position position="174"/>
    </location>
</feature>
<feature type="binding site" evidence="1">
    <location>
        <begin position="50"/>
        <end position="52"/>
    </location>
    <ligand>
        <name>3-dehydroquinate</name>
        <dbReference type="ChEBI" id="CHEBI:32364"/>
    </ligand>
</feature>
<feature type="binding site" evidence="1">
    <location>
        <position position="86"/>
    </location>
    <ligand>
        <name>3-dehydroquinate</name>
        <dbReference type="ChEBI" id="CHEBI:32364"/>
    </ligand>
</feature>
<feature type="binding site" evidence="1">
    <location>
        <position position="216"/>
    </location>
    <ligand>
        <name>3-dehydroquinate</name>
        <dbReference type="ChEBI" id="CHEBI:32364"/>
    </ligand>
</feature>
<feature type="binding site" evidence="1">
    <location>
        <position position="235"/>
    </location>
    <ligand>
        <name>3-dehydroquinate</name>
        <dbReference type="ChEBI" id="CHEBI:32364"/>
    </ligand>
</feature>
<feature type="binding site" evidence="1">
    <location>
        <position position="239"/>
    </location>
    <ligand>
        <name>3-dehydroquinate</name>
        <dbReference type="ChEBI" id="CHEBI:32364"/>
    </ligand>
</feature>
<feature type="strand" evidence="3">
    <location>
        <begin position="3"/>
        <end position="6"/>
    </location>
</feature>
<feature type="strand" evidence="3">
    <location>
        <begin position="8"/>
        <end position="10"/>
    </location>
</feature>
<feature type="strand" evidence="3">
    <location>
        <begin position="13"/>
        <end position="19"/>
    </location>
</feature>
<feature type="strand" evidence="3">
    <location>
        <begin position="21"/>
        <end position="26"/>
    </location>
</feature>
<feature type="helix" evidence="3">
    <location>
        <begin position="31"/>
        <end position="43"/>
    </location>
</feature>
<feature type="strand" evidence="3">
    <location>
        <begin position="47"/>
        <end position="52"/>
    </location>
</feature>
<feature type="helix" evidence="3">
    <location>
        <begin position="53"/>
        <end position="55"/>
    </location>
</feature>
<feature type="turn" evidence="3">
    <location>
        <begin position="57"/>
        <end position="60"/>
    </location>
</feature>
<feature type="helix" evidence="3">
    <location>
        <begin position="62"/>
        <end position="75"/>
    </location>
</feature>
<feature type="strand" evidence="3">
    <location>
        <begin position="76"/>
        <end position="78"/>
    </location>
</feature>
<feature type="strand" evidence="3">
    <location>
        <begin position="81"/>
        <end position="84"/>
    </location>
</feature>
<feature type="turn" evidence="3">
    <location>
        <begin position="88"/>
        <end position="91"/>
    </location>
</feature>
<feature type="helix" evidence="3">
    <location>
        <begin position="99"/>
        <end position="112"/>
    </location>
</feature>
<feature type="strand" evidence="3">
    <location>
        <begin position="116"/>
        <end position="121"/>
    </location>
</feature>
<feature type="helix" evidence="3">
    <location>
        <begin position="122"/>
        <end position="126"/>
    </location>
</feature>
<feature type="helix" evidence="3">
    <location>
        <begin position="127"/>
        <end position="137"/>
    </location>
</feature>
<feature type="strand" evidence="3">
    <location>
        <begin position="141"/>
        <end position="150"/>
    </location>
</feature>
<feature type="helix" evidence="3">
    <location>
        <begin position="155"/>
        <end position="167"/>
    </location>
</feature>
<feature type="strand" evidence="3">
    <location>
        <begin position="171"/>
        <end position="177"/>
    </location>
</feature>
<feature type="helix" evidence="3">
    <location>
        <begin position="182"/>
        <end position="198"/>
    </location>
</feature>
<feature type="strand" evidence="3">
    <location>
        <begin position="203"/>
        <end position="207"/>
    </location>
</feature>
<feature type="turn" evidence="3">
    <location>
        <begin position="209"/>
        <end position="212"/>
    </location>
</feature>
<feature type="helix" evidence="3">
    <location>
        <begin position="213"/>
        <end position="218"/>
    </location>
</feature>
<feature type="helix" evidence="3">
    <location>
        <begin position="219"/>
        <end position="222"/>
    </location>
</feature>
<feature type="strand" evidence="3">
    <location>
        <begin position="226"/>
        <end position="228"/>
    </location>
</feature>
<feature type="strand" evidence="3">
    <location>
        <begin position="230"/>
        <end position="233"/>
    </location>
</feature>
<feature type="helix" evidence="3">
    <location>
        <begin position="242"/>
        <end position="256"/>
    </location>
</feature>
<evidence type="ECO:0000255" key="1">
    <source>
        <dbReference type="HAMAP-Rule" id="MF_00214"/>
    </source>
</evidence>
<evidence type="ECO:0000269" key="2">
    <source ref="2"/>
</evidence>
<evidence type="ECO:0007829" key="3">
    <source>
        <dbReference type="PDB" id="2YR1"/>
    </source>
</evidence>